<comment type="function">
    <text>Rod linker protein, associated with phycocyanin. Linker polypeptides determine the state of aggregation and the location of the disk-shaped phycobiliprotein units within the phycobilisome and modulate their spectroscopic properties in order to mediate a directed and optimal energy transfer.</text>
</comment>
<comment type="subunit">
    <text evidence="3">Part of 2 PBS rod complexes, the conventional CpcG-PBS rod and a photosystem I-specific CpcL-PBS rod, both of which include ferredoxin--NADP reductase (petH). CpcG-PBS has on average 3 stacked phycocyanin hexamers (PC, CpcA and CpcB). Linker CpcG connects the PC stack to the thylakoid, the hexamers are linked by 1 copy of CpcC1, 1 copy of CpcC2 and the stack is terminated by a single copy of CpcD. The CpcL-PBS has on average 5 stacked phycocyanin hexamers (PC, CpcA and CpcB). Linker CpcL connects the PC stack to the thylakoid, the hexamers are linked by 1 copy of CpcC1, 3 copies of CpcC2 and the stack is terminated by a single copy of CpcD.</text>
</comment>
<comment type="subcellular location">
    <subcellularLocation>
        <location evidence="1">Cellular thylakoid membrane</location>
        <topology evidence="1">Peripheral membrane protein</topology>
        <orientation evidence="1">Cytoplasmic side</orientation>
    </subcellularLocation>
    <text evidence="3">This protein occurs in the rod, it is associated with phycocyanin.</text>
</comment>
<comment type="similarity">
    <text evidence="4">Belongs to the phycobilisome linker protein family.</text>
</comment>
<proteinExistence type="evidence at protein level"/>
<organism>
    <name type="scientific">Synechocystis sp. (strain ATCC 27184 / PCC 6803 / Kazusa)</name>
    <dbReference type="NCBI Taxonomy" id="1111708"/>
    <lineage>
        <taxon>Bacteria</taxon>
        <taxon>Bacillati</taxon>
        <taxon>Cyanobacteriota</taxon>
        <taxon>Cyanophyceae</taxon>
        <taxon>Synechococcales</taxon>
        <taxon>Merismopediaceae</taxon>
        <taxon>Synechocystis</taxon>
    </lineage>
</organism>
<accession>P73202</accession>
<keyword id="KW-0002">3D-structure</keyword>
<keyword id="KW-0042">Antenna complex</keyword>
<keyword id="KW-0903">Direct protein sequencing</keyword>
<keyword id="KW-0472">Membrane</keyword>
<keyword id="KW-0602">Photosynthesis</keyword>
<keyword id="KW-0605">Phycobilisome</keyword>
<keyword id="KW-1185">Reference proteome</keyword>
<keyword id="KW-0793">Thylakoid</keyword>
<protein>
    <recommendedName>
        <fullName>Phycobilisome 8.9 kDa linker polypeptide, phycocyanin-associated, rod</fullName>
        <shortName>L-8.9/R</shortName>
    </recommendedName>
    <alternativeName>
        <fullName>Rod-capping linker protein</fullName>
    </alternativeName>
</protein>
<reference key="1">
    <citation type="journal article" date="1996" name="DNA Res.">
        <title>Sequence analysis of the genome of the unicellular cyanobacterium Synechocystis sp. strain PCC6803. II. Sequence determination of the entire genome and assignment of potential protein-coding regions.</title>
        <authorList>
            <person name="Kaneko T."/>
            <person name="Sato S."/>
            <person name="Kotani H."/>
            <person name="Tanaka A."/>
            <person name="Asamizu E."/>
            <person name="Nakamura Y."/>
            <person name="Miyajima N."/>
            <person name="Hirosawa M."/>
            <person name="Sugiura M."/>
            <person name="Sasamoto S."/>
            <person name="Kimura T."/>
            <person name="Hosouchi T."/>
            <person name="Matsuno A."/>
            <person name="Muraki A."/>
            <person name="Nakazaki N."/>
            <person name="Naruo K."/>
            <person name="Okumura S."/>
            <person name="Shimpo S."/>
            <person name="Takeuchi C."/>
            <person name="Wada T."/>
            <person name="Watanabe A."/>
            <person name="Yamada M."/>
            <person name="Yasuda M."/>
            <person name="Tabata S."/>
        </authorList>
    </citation>
    <scope>NUCLEOTIDE SEQUENCE [LARGE SCALE GENOMIC DNA]</scope>
    <source>
        <strain>ATCC 27184 / PCC 6803 / Kazusa</strain>
    </source>
</reference>
<reference key="2">
    <citation type="journal article" date="1997" name="Electrophoresis">
        <title>Towards a proteome project of cyanobacterium Synechocystis sp. strain PCC6803: linking 130 protein spots with their respective genes.</title>
        <authorList>
            <person name="Sazuka T."/>
            <person name="Ohara O."/>
        </authorList>
    </citation>
    <scope>PROTEIN SEQUENCE OF 1-20</scope>
</reference>
<reference key="3">
    <citation type="journal article" date="2019" name="MBio">
        <title>Phycobilisomes Harbor FNRL in Cyanobacteria.</title>
        <authorList>
            <person name="Liu H."/>
            <person name="Weisz D.A."/>
            <person name="Zhang M.M."/>
            <person name="Cheng M."/>
            <person name="Zhang B."/>
            <person name="Zhang H."/>
            <person name="Gerstenecker G.S."/>
            <person name="Pakrasi H.B."/>
            <person name="Gross M.L."/>
            <person name="Blankenship R.E."/>
        </authorList>
    </citation>
    <scope>SUBUNIT</scope>
    <scope>SUBCELLULAR LOCATION</scope>
    <source>
        <strain>ATCC 27184 / PCC 6803 / Kazusa</strain>
    </source>
</reference>
<evidence type="ECO:0000250" key="1"/>
<evidence type="ECO:0000255" key="2">
    <source>
        <dbReference type="PROSITE-ProRule" id="PRU00771"/>
    </source>
</evidence>
<evidence type="ECO:0000269" key="3">
    <source>
    </source>
</evidence>
<evidence type="ECO:0000305" key="4"/>
<feature type="chain" id="PRO_0000199233" description="Phycobilisome 8.9 kDa linker polypeptide, phycocyanin-associated, rod">
    <location>
        <begin position="1"/>
        <end position="83"/>
    </location>
</feature>
<feature type="domain" description="CpcD-like" evidence="2">
    <location>
        <begin position="17"/>
        <end position="75"/>
    </location>
</feature>
<gene>
    <name type="primary">cpcD</name>
    <name type="ordered locus">ssl3093</name>
</gene>
<dbReference type="EMBL" id="BA000022">
    <property type="protein sequence ID" value="BAA17228.1"/>
    <property type="molecule type" value="Genomic_DNA"/>
</dbReference>
<dbReference type="PIR" id="S75314">
    <property type="entry name" value="S75314"/>
</dbReference>
<dbReference type="PDB" id="7SC8">
    <property type="method" value="EM"/>
    <property type="resolution" value="2.10 A"/>
    <property type="chains" value="BN=1-83"/>
</dbReference>
<dbReference type="PDB" id="7SCA">
    <property type="method" value="EM"/>
    <property type="resolution" value="2.10 A"/>
    <property type="chains" value="BN=1-83"/>
</dbReference>
<dbReference type="PDB" id="8TRO">
    <property type="method" value="EM"/>
    <property type="resolution" value="1.90 A"/>
    <property type="chains" value="d=1-83"/>
</dbReference>
<dbReference type="PDBsum" id="7SC8"/>
<dbReference type="PDBsum" id="7SCA"/>
<dbReference type="PDBsum" id="8TRO"/>
<dbReference type="EMDB" id="EMD-25029"/>
<dbReference type="EMDB" id="EMD-25031"/>
<dbReference type="EMDB" id="EMD-41585"/>
<dbReference type="SMR" id="P73202"/>
<dbReference type="STRING" id="1148.gene:10498091"/>
<dbReference type="PaxDb" id="1148-1652305"/>
<dbReference type="EnsemblBacteria" id="BAA17228">
    <property type="protein sequence ID" value="BAA17228"/>
    <property type="gene ID" value="BAA17228"/>
</dbReference>
<dbReference type="KEGG" id="syn:ssl3093"/>
<dbReference type="eggNOG" id="COG0369">
    <property type="taxonomic scope" value="Bacteria"/>
</dbReference>
<dbReference type="InParanoid" id="P73202"/>
<dbReference type="Proteomes" id="UP000001425">
    <property type="component" value="Chromosome"/>
</dbReference>
<dbReference type="GO" id="GO:0030089">
    <property type="term" value="C:phycobilisome"/>
    <property type="evidence" value="ECO:0007669"/>
    <property type="project" value="UniProtKB-KW"/>
</dbReference>
<dbReference type="GO" id="GO:0031676">
    <property type="term" value="C:plasma membrane-derived thylakoid membrane"/>
    <property type="evidence" value="ECO:0007669"/>
    <property type="project" value="UniProtKB-SubCell"/>
</dbReference>
<dbReference type="GO" id="GO:0015979">
    <property type="term" value="P:photosynthesis"/>
    <property type="evidence" value="ECO:0007669"/>
    <property type="project" value="UniProtKB-KW"/>
</dbReference>
<dbReference type="InterPro" id="IPR008213">
    <property type="entry name" value="CpcD-like_dom"/>
</dbReference>
<dbReference type="Pfam" id="PF01383">
    <property type="entry name" value="CpcD"/>
    <property type="match status" value="1"/>
</dbReference>
<dbReference type="SMART" id="SM01094">
    <property type="entry name" value="CpcD"/>
    <property type="match status" value="1"/>
</dbReference>
<dbReference type="PROSITE" id="PS51441">
    <property type="entry name" value="CPCD_LIKE"/>
    <property type="match status" value="1"/>
</dbReference>
<sequence length="83" mass="9322">MLGQSSLVGYSNTQAANRVFVYEVSGLRQTDANENSAHDIRRSGSVFIKVPYARMNDEMRRISRLGGTIVNIRPYQADSNEQN</sequence>
<name>PYS1_SYNY3</name>